<accession>O13711</accession>
<organism>
    <name type="scientific">Schizosaccharomyces pombe (strain 972 / ATCC 24843)</name>
    <name type="common">Fission yeast</name>
    <dbReference type="NCBI Taxonomy" id="284812"/>
    <lineage>
        <taxon>Eukaryota</taxon>
        <taxon>Fungi</taxon>
        <taxon>Dikarya</taxon>
        <taxon>Ascomycota</taxon>
        <taxon>Taphrinomycotina</taxon>
        <taxon>Schizosaccharomycetes</taxon>
        <taxon>Schizosaccharomycetales</taxon>
        <taxon>Schizosaccharomycetaceae</taxon>
        <taxon>Schizosaccharomyces</taxon>
    </lineage>
</organism>
<sequence length="267" mass="29710">MSMPIVREVNSDGSMLQPFSNPLWVPTPVGRSGRKHRTLKMCIVLPDTGYDVTQVCDPWQFFVKEGFMVNFATLTGIVAQADQRLLSGVKSWFIGATYKTKDIYERMSTTKEFLSPSNMSDMSFTFENFDLVYVPGGQDPAVLELVESPRLSSLLADYIPLCARVSGTRVLATMAQGAIAVQRAAPNLEIKSTTTPLYMERASYLFGASNPPAYTYTYIPESKYVPGPKTAHWVYSDEKFFYASGRYSGDVELLCKALRNLVASALH</sequence>
<name>YDZ4_SCHPO</name>
<feature type="chain" id="PRO_0000116681" description="Uncharacterized protein C14C4.04">
    <location>
        <begin position="1"/>
        <end position="267"/>
    </location>
</feature>
<evidence type="ECO:0000305" key="1"/>
<keyword id="KW-1185">Reference proteome</keyword>
<comment type="similarity">
    <text evidence="1">To S.pombe SpAC18G6.12c.</text>
</comment>
<gene>
    <name type="ORF">SPAC14C4.04</name>
</gene>
<dbReference type="EMBL" id="CU329670">
    <property type="protein sequence ID" value="CAB11197.1"/>
    <property type="molecule type" value="Genomic_DNA"/>
</dbReference>
<dbReference type="PIR" id="T37689">
    <property type="entry name" value="T37689"/>
</dbReference>
<dbReference type="RefSeq" id="NP_594909.1">
    <property type="nucleotide sequence ID" value="NM_001020341.2"/>
</dbReference>
<dbReference type="SMR" id="O13711"/>
<dbReference type="BioGRID" id="278577">
    <property type="interactions" value="5"/>
</dbReference>
<dbReference type="STRING" id="284812.O13711"/>
<dbReference type="iPTMnet" id="O13711"/>
<dbReference type="PaxDb" id="4896-SPAC14C4.04.1"/>
<dbReference type="EnsemblFungi" id="SPAC14C4.04.1">
    <property type="protein sequence ID" value="SPAC14C4.04.1:pep"/>
    <property type="gene ID" value="SPAC14C4.04"/>
</dbReference>
<dbReference type="KEGG" id="spo:2542101"/>
<dbReference type="PomBase" id="SPAC14C4.04"/>
<dbReference type="VEuPathDB" id="FungiDB:SPAC14C4.04"/>
<dbReference type="eggNOG" id="ENOG502R0B6">
    <property type="taxonomic scope" value="Eukaryota"/>
</dbReference>
<dbReference type="HOGENOM" id="CLU_1042656_0_0_1"/>
<dbReference type="InParanoid" id="O13711"/>
<dbReference type="OMA" id="TPLYMER"/>
<dbReference type="PRO" id="PR:O13711"/>
<dbReference type="Proteomes" id="UP000002485">
    <property type="component" value="Chromosome I"/>
</dbReference>
<dbReference type="GO" id="GO:0000329">
    <property type="term" value="C:fungal-type vacuole membrane"/>
    <property type="evidence" value="ECO:0007005"/>
    <property type="project" value="PomBase"/>
</dbReference>
<dbReference type="GO" id="GO:0005794">
    <property type="term" value="C:Golgi apparatus"/>
    <property type="evidence" value="ECO:0007005"/>
    <property type="project" value="PomBase"/>
</dbReference>
<dbReference type="GO" id="GO:0003824">
    <property type="term" value="F:catalytic activity"/>
    <property type="evidence" value="ECO:0000255"/>
    <property type="project" value="PomBase"/>
</dbReference>
<dbReference type="FunFam" id="3.40.50.880:FF:000167">
    <property type="entry name" value="Uncharacterized protein C18G6.12c"/>
    <property type="match status" value="1"/>
</dbReference>
<dbReference type="Gene3D" id="3.40.50.880">
    <property type="match status" value="1"/>
</dbReference>
<dbReference type="InterPro" id="IPR029062">
    <property type="entry name" value="Class_I_gatase-like"/>
</dbReference>
<dbReference type="InterPro" id="IPR032633">
    <property type="entry name" value="ThiJ-like"/>
</dbReference>
<dbReference type="PANTHER" id="PTHR43068">
    <property type="entry name" value="SLR1854 PROTEIN"/>
    <property type="match status" value="1"/>
</dbReference>
<dbReference type="PANTHER" id="PTHR43068:SF1">
    <property type="entry name" value="SLR1854 PROTEIN"/>
    <property type="match status" value="1"/>
</dbReference>
<dbReference type="Pfam" id="PF17124">
    <property type="entry name" value="ThiJ_like"/>
    <property type="match status" value="1"/>
</dbReference>
<dbReference type="SUPFAM" id="SSF52317">
    <property type="entry name" value="Class I glutamine amidotransferase-like"/>
    <property type="match status" value="1"/>
</dbReference>
<reference key="1">
    <citation type="journal article" date="2002" name="Nature">
        <title>The genome sequence of Schizosaccharomyces pombe.</title>
        <authorList>
            <person name="Wood V."/>
            <person name="Gwilliam R."/>
            <person name="Rajandream M.A."/>
            <person name="Lyne M.H."/>
            <person name="Lyne R."/>
            <person name="Stewart A."/>
            <person name="Sgouros J.G."/>
            <person name="Peat N."/>
            <person name="Hayles J."/>
            <person name="Baker S.G."/>
            <person name="Basham D."/>
            <person name="Bowman S."/>
            <person name="Brooks K."/>
            <person name="Brown D."/>
            <person name="Brown S."/>
            <person name="Chillingworth T."/>
            <person name="Churcher C.M."/>
            <person name="Collins M."/>
            <person name="Connor R."/>
            <person name="Cronin A."/>
            <person name="Davis P."/>
            <person name="Feltwell T."/>
            <person name="Fraser A."/>
            <person name="Gentles S."/>
            <person name="Goble A."/>
            <person name="Hamlin N."/>
            <person name="Harris D.E."/>
            <person name="Hidalgo J."/>
            <person name="Hodgson G."/>
            <person name="Holroyd S."/>
            <person name="Hornsby T."/>
            <person name="Howarth S."/>
            <person name="Huckle E.J."/>
            <person name="Hunt S."/>
            <person name="Jagels K."/>
            <person name="James K.D."/>
            <person name="Jones L."/>
            <person name="Jones M."/>
            <person name="Leather S."/>
            <person name="McDonald S."/>
            <person name="McLean J."/>
            <person name="Mooney P."/>
            <person name="Moule S."/>
            <person name="Mungall K.L."/>
            <person name="Murphy L.D."/>
            <person name="Niblett D."/>
            <person name="Odell C."/>
            <person name="Oliver K."/>
            <person name="O'Neil S."/>
            <person name="Pearson D."/>
            <person name="Quail M.A."/>
            <person name="Rabbinowitsch E."/>
            <person name="Rutherford K.M."/>
            <person name="Rutter S."/>
            <person name="Saunders D."/>
            <person name="Seeger K."/>
            <person name="Sharp S."/>
            <person name="Skelton J."/>
            <person name="Simmonds M.N."/>
            <person name="Squares R."/>
            <person name="Squares S."/>
            <person name="Stevens K."/>
            <person name="Taylor K."/>
            <person name="Taylor R.G."/>
            <person name="Tivey A."/>
            <person name="Walsh S.V."/>
            <person name="Warren T."/>
            <person name="Whitehead S."/>
            <person name="Woodward J.R."/>
            <person name="Volckaert G."/>
            <person name="Aert R."/>
            <person name="Robben J."/>
            <person name="Grymonprez B."/>
            <person name="Weltjens I."/>
            <person name="Vanstreels E."/>
            <person name="Rieger M."/>
            <person name="Schaefer M."/>
            <person name="Mueller-Auer S."/>
            <person name="Gabel C."/>
            <person name="Fuchs M."/>
            <person name="Duesterhoeft A."/>
            <person name="Fritzc C."/>
            <person name="Holzer E."/>
            <person name="Moestl D."/>
            <person name="Hilbert H."/>
            <person name="Borzym K."/>
            <person name="Langer I."/>
            <person name="Beck A."/>
            <person name="Lehrach H."/>
            <person name="Reinhardt R."/>
            <person name="Pohl T.M."/>
            <person name="Eger P."/>
            <person name="Zimmermann W."/>
            <person name="Wedler H."/>
            <person name="Wambutt R."/>
            <person name="Purnelle B."/>
            <person name="Goffeau A."/>
            <person name="Cadieu E."/>
            <person name="Dreano S."/>
            <person name="Gloux S."/>
            <person name="Lelaure V."/>
            <person name="Mottier S."/>
            <person name="Galibert F."/>
            <person name="Aves S.J."/>
            <person name="Xiang Z."/>
            <person name="Hunt C."/>
            <person name="Moore K."/>
            <person name="Hurst S.M."/>
            <person name="Lucas M."/>
            <person name="Rochet M."/>
            <person name="Gaillardin C."/>
            <person name="Tallada V.A."/>
            <person name="Garzon A."/>
            <person name="Thode G."/>
            <person name="Daga R.R."/>
            <person name="Cruzado L."/>
            <person name="Jimenez J."/>
            <person name="Sanchez M."/>
            <person name="del Rey F."/>
            <person name="Benito J."/>
            <person name="Dominguez A."/>
            <person name="Revuelta J.L."/>
            <person name="Moreno S."/>
            <person name="Armstrong J."/>
            <person name="Forsburg S.L."/>
            <person name="Cerutti L."/>
            <person name="Lowe T."/>
            <person name="McCombie W.R."/>
            <person name="Paulsen I."/>
            <person name="Potashkin J."/>
            <person name="Shpakovski G.V."/>
            <person name="Ussery D."/>
            <person name="Barrell B.G."/>
            <person name="Nurse P."/>
        </authorList>
    </citation>
    <scope>NUCLEOTIDE SEQUENCE [LARGE SCALE GENOMIC DNA]</scope>
    <source>
        <strain>972 / ATCC 24843</strain>
    </source>
</reference>
<protein>
    <recommendedName>
        <fullName>Uncharacterized protein C14C4.04</fullName>
    </recommendedName>
</protein>
<proteinExistence type="predicted"/>